<gene>
    <name evidence="1" type="primary">ligA</name>
    <name type="ordered locus">NTHI1265</name>
</gene>
<comment type="function">
    <text evidence="1">DNA ligase that catalyzes the formation of phosphodiester linkages between 5'-phosphoryl and 3'-hydroxyl groups in double-stranded DNA using NAD as a coenzyme and as the energy source for the reaction. It is essential for DNA replication and repair of damaged DNA.</text>
</comment>
<comment type="catalytic activity">
    <reaction evidence="1">
        <text>NAD(+) + (deoxyribonucleotide)n-3'-hydroxyl + 5'-phospho-(deoxyribonucleotide)m = (deoxyribonucleotide)n+m + AMP + beta-nicotinamide D-nucleotide.</text>
        <dbReference type="EC" id="6.5.1.2"/>
    </reaction>
</comment>
<comment type="cofactor">
    <cofactor evidence="1">
        <name>Mg(2+)</name>
        <dbReference type="ChEBI" id="CHEBI:18420"/>
    </cofactor>
    <cofactor evidence="1">
        <name>Mn(2+)</name>
        <dbReference type="ChEBI" id="CHEBI:29035"/>
    </cofactor>
</comment>
<comment type="similarity">
    <text evidence="1">Belongs to the NAD-dependent DNA ligase family. LigA subfamily.</text>
</comment>
<comment type="sequence caution" evidence="2">
    <conflict type="erroneous initiation">
        <sequence resource="EMBL-CDS" id="AAX88107"/>
    </conflict>
</comment>
<dbReference type="EC" id="6.5.1.2" evidence="1"/>
<dbReference type="EMBL" id="CP000057">
    <property type="protein sequence ID" value="AAX88107.1"/>
    <property type="status" value="ALT_INIT"/>
    <property type="molecule type" value="Genomic_DNA"/>
</dbReference>
<dbReference type="RefSeq" id="WP_011272385.1">
    <property type="nucleotide sequence ID" value="NC_007146.2"/>
</dbReference>
<dbReference type="SMR" id="Q4QLJ0"/>
<dbReference type="GeneID" id="93220110"/>
<dbReference type="KEGG" id="hit:NTHI1265"/>
<dbReference type="HOGENOM" id="CLU_007764_2_1_6"/>
<dbReference type="Proteomes" id="UP000002525">
    <property type="component" value="Chromosome"/>
</dbReference>
<dbReference type="GO" id="GO:0005829">
    <property type="term" value="C:cytosol"/>
    <property type="evidence" value="ECO:0007669"/>
    <property type="project" value="TreeGrafter"/>
</dbReference>
<dbReference type="GO" id="GO:0003677">
    <property type="term" value="F:DNA binding"/>
    <property type="evidence" value="ECO:0007669"/>
    <property type="project" value="InterPro"/>
</dbReference>
<dbReference type="GO" id="GO:0003911">
    <property type="term" value="F:DNA ligase (NAD+) activity"/>
    <property type="evidence" value="ECO:0007669"/>
    <property type="project" value="UniProtKB-UniRule"/>
</dbReference>
<dbReference type="GO" id="GO:0046872">
    <property type="term" value="F:metal ion binding"/>
    <property type="evidence" value="ECO:0007669"/>
    <property type="project" value="UniProtKB-KW"/>
</dbReference>
<dbReference type="GO" id="GO:0006281">
    <property type="term" value="P:DNA repair"/>
    <property type="evidence" value="ECO:0007669"/>
    <property type="project" value="UniProtKB-KW"/>
</dbReference>
<dbReference type="GO" id="GO:0006260">
    <property type="term" value="P:DNA replication"/>
    <property type="evidence" value="ECO:0007669"/>
    <property type="project" value="UniProtKB-KW"/>
</dbReference>
<dbReference type="CDD" id="cd17748">
    <property type="entry name" value="BRCT_DNA_ligase_like"/>
    <property type="match status" value="1"/>
</dbReference>
<dbReference type="CDD" id="cd00114">
    <property type="entry name" value="LIGANc"/>
    <property type="match status" value="1"/>
</dbReference>
<dbReference type="FunFam" id="1.10.150.20:FF:000006">
    <property type="entry name" value="DNA ligase"/>
    <property type="match status" value="1"/>
</dbReference>
<dbReference type="FunFam" id="1.10.150.20:FF:000007">
    <property type="entry name" value="DNA ligase"/>
    <property type="match status" value="1"/>
</dbReference>
<dbReference type="FunFam" id="1.10.287.610:FF:000002">
    <property type="entry name" value="DNA ligase"/>
    <property type="match status" value="1"/>
</dbReference>
<dbReference type="FunFam" id="2.40.50.140:FF:000012">
    <property type="entry name" value="DNA ligase"/>
    <property type="match status" value="1"/>
</dbReference>
<dbReference type="FunFam" id="3.30.470.30:FF:000001">
    <property type="entry name" value="DNA ligase"/>
    <property type="match status" value="1"/>
</dbReference>
<dbReference type="FunFam" id="6.20.10.30:FF:000001">
    <property type="entry name" value="DNA ligase"/>
    <property type="match status" value="1"/>
</dbReference>
<dbReference type="Gene3D" id="6.20.10.30">
    <property type="match status" value="1"/>
</dbReference>
<dbReference type="Gene3D" id="1.10.150.20">
    <property type="entry name" value="5' to 3' exonuclease, C-terminal subdomain"/>
    <property type="match status" value="2"/>
</dbReference>
<dbReference type="Gene3D" id="3.40.50.10190">
    <property type="entry name" value="BRCT domain"/>
    <property type="match status" value="1"/>
</dbReference>
<dbReference type="Gene3D" id="3.30.470.30">
    <property type="entry name" value="DNA ligase/mRNA capping enzyme"/>
    <property type="match status" value="1"/>
</dbReference>
<dbReference type="Gene3D" id="1.10.287.610">
    <property type="entry name" value="Helix hairpin bin"/>
    <property type="match status" value="1"/>
</dbReference>
<dbReference type="Gene3D" id="2.40.50.140">
    <property type="entry name" value="Nucleic acid-binding proteins"/>
    <property type="match status" value="1"/>
</dbReference>
<dbReference type="HAMAP" id="MF_01588">
    <property type="entry name" value="DNA_ligase_A"/>
    <property type="match status" value="1"/>
</dbReference>
<dbReference type="InterPro" id="IPR001357">
    <property type="entry name" value="BRCT_dom"/>
</dbReference>
<dbReference type="InterPro" id="IPR036420">
    <property type="entry name" value="BRCT_dom_sf"/>
</dbReference>
<dbReference type="InterPro" id="IPR041663">
    <property type="entry name" value="DisA/LigA_HHH"/>
</dbReference>
<dbReference type="InterPro" id="IPR001679">
    <property type="entry name" value="DNA_ligase"/>
</dbReference>
<dbReference type="InterPro" id="IPR018239">
    <property type="entry name" value="DNA_ligase_AS"/>
</dbReference>
<dbReference type="InterPro" id="IPR033136">
    <property type="entry name" value="DNA_ligase_CS"/>
</dbReference>
<dbReference type="InterPro" id="IPR013839">
    <property type="entry name" value="DNAligase_adenylation"/>
</dbReference>
<dbReference type="InterPro" id="IPR013840">
    <property type="entry name" value="DNAligase_N"/>
</dbReference>
<dbReference type="InterPro" id="IPR003583">
    <property type="entry name" value="Hlx-hairpin-Hlx_DNA-bd_motif"/>
</dbReference>
<dbReference type="InterPro" id="IPR012340">
    <property type="entry name" value="NA-bd_OB-fold"/>
</dbReference>
<dbReference type="InterPro" id="IPR004150">
    <property type="entry name" value="NAD_DNA_ligase_OB"/>
</dbReference>
<dbReference type="InterPro" id="IPR010994">
    <property type="entry name" value="RuvA_2-like"/>
</dbReference>
<dbReference type="InterPro" id="IPR004149">
    <property type="entry name" value="Znf_DNAligase_C4"/>
</dbReference>
<dbReference type="NCBIfam" id="TIGR00575">
    <property type="entry name" value="dnlj"/>
    <property type="match status" value="1"/>
</dbReference>
<dbReference type="NCBIfam" id="NF005932">
    <property type="entry name" value="PRK07956.1"/>
    <property type="match status" value="1"/>
</dbReference>
<dbReference type="PANTHER" id="PTHR23389">
    <property type="entry name" value="CHROMOSOME TRANSMISSION FIDELITY FACTOR 18"/>
    <property type="match status" value="1"/>
</dbReference>
<dbReference type="PANTHER" id="PTHR23389:SF9">
    <property type="entry name" value="DNA LIGASE"/>
    <property type="match status" value="1"/>
</dbReference>
<dbReference type="Pfam" id="PF00533">
    <property type="entry name" value="BRCT"/>
    <property type="match status" value="1"/>
</dbReference>
<dbReference type="Pfam" id="PF01653">
    <property type="entry name" value="DNA_ligase_aden"/>
    <property type="match status" value="1"/>
</dbReference>
<dbReference type="Pfam" id="PF03120">
    <property type="entry name" value="DNA_ligase_OB"/>
    <property type="match status" value="1"/>
</dbReference>
<dbReference type="Pfam" id="PF03119">
    <property type="entry name" value="DNA_ligase_ZBD"/>
    <property type="match status" value="1"/>
</dbReference>
<dbReference type="Pfam" id="PF12826">
    <property type="entry name" value="HHH_2"/>
    <property type="match status" value="1"/>
</dbReference>
<dbReference type="Pfam" id="PF14520">
    <property type="entry name" value="HHH_5"/>
    <property type="match status" value="1"/>
</dbReference>
<dbReference type="Pfam" id="PF22745">
    <property type="entry name" value="Nlig-Ia"/>
    <property type="match status" value="1"/>
</dbReference>
<dbReference type="PIRSF" id="PIRSF001604">
    <property type="entry name" value="LigA"/>
    <property type="match status" value="1"/>
</dbReference>
<dbReference type="SMART" id="SM00292">
    <property type="entry name" value="BRCT"/>
    <property type="match status" value="1"/>
</dbReference>
<dbReference type="SMART" id="SM00278">
    <property type="entry name" value="HhH1"/>
    <property type="match status" value="4"/>
</dbReference>
<dbReference type="SMART" id="SM00532">
    <property type="entry name" value="LIGANc"/>
    <property type="match status" value="1"/>
</dbReference>
<dbReference type="SUPFAM" id="SSF52113">
    <property type="entry name" value="BRCT domain"/>
    <property type="match status" value="1"/>
</dbReference>
<dbReference type="SUPFAM" id="SSF56091">
    <property type="entry name" value="DNA ligase/mRNA capping enzyme, catalytic domain"/>
    <property type="match status" value="1"/>
</dbReference>
<dbReference type="SUPFAM" id="SSF50249">
    <property type="entry name" value="Nucleic acid-binding proteins"/>
    <property type="match status" value="1"/>
</dbReference>
<dbReference type="SUPFAM" id="SSF47781">
    <property type="entry name" value="RuvA domain 2-like"/>
    <property type="match status" value="1"/>
</dbReference>
<dbReference type="PROSITE" id="PS50172">
    <property type="entry name" value="BRCT"/>
    <property type="match status" value="1"/>
</dbReference>
<dbReference type="PROSITE" id="PS01055">
    <property type="entry name" value="DNA_LIGASE_N1"/>
    <property type="match status" value="1"/>
</dbReference>
<dbReference type="PROSITE" id="PS01056">
    <property type="entry name" value="DNA_LIGASE_N2"/>
    <property type="match status" value="1"/>
</dbReference>
<reference key="1">
    <citation type="journal article" date="2005" name="J. Bacteriol.">
        <title>Genomic sequence of an otitis media isolate of nontypeable Haemophilus influenzae: comparative study with H. influenzae serotype d, strain KW20.</title>
        <authorList>
            <person name="Harrison A."/>
            <person name="Dyer D.W."/>
            <person name="Gillaspy A."/>
            <person name="Ray W.C."/>
            <person name="Mungur R."/>
            <person name="Carson M.B."/>
            <person name="Zhong H."/>
            <person name="Gipson J."/>
            <person name="Gipson M."/>
            <person name="Johnson L.S."/>
            <person name="Lewis L."/>
            <person name="Bakaletz L.O."/>
            <person name="Munson R.S. Jr."/>
        </authorList>
    </citation>
    <scope>NUCLEOTIDE SEQUENCE [LARGE SCALE GENOMIC DNA]</scope>
    <source>
        <strain>86-028NP</strain>
    </source>
</reference>
<protein>
    <recommendedName>
        <fullName evidence="1">DNA ligase</fullName>
        <ecNumber evidence="1">6.5.1.2</ecNumber>
    </recommendedName>
    <alternativeName>
        <fullName evidence="1">Polydeoxyribonucleotide synthase [NAD(+)]</fullName>
    </alternativeName>
</protein>
<name>DNLJ_HAEI8</name>
<feature type="chain" id="PRO_0000313256" description="DNA ligase">
    <location>
        <begin position="1"/>
        <end position="670"/>
    </location>
</feature>
<feature type="domain" description="BRCT" evidence="1">
    <location>
        <begin position="592"/>
        <end position="670"/>
    </location>
</feature>
<feature type="active site" description="N6-AMP-lysine intermediate" evidence="1">
    <location>
        <position position="116"/>
    </location>
</feature>
<feature type="binding site" evidence="1">
    <location>
        <begin position="32"/>
        <end position="36"/>
    </location>
    <ligand>
        <name>NAD(+)</name>
        <dbReference type="ChEBI" id="CHEBI:57540"/>
    </ligand>
</feature>
<feature type="binding site" evidence="1">
    <location>
        <begin position="81"/>
        <end position="82"/>
    </location>
    <ligand>
        <name>NAD(+)</name>
        <dbReference type="ChEBI" id="CHEBI:57540"/>
    </ligand>
</feature>
<feature type="binding site" evidence="1">
    <location>
        <position position="114"/>
    </location>
    <ligand>
        <name>NAD(+)</name>
        <dbReference type="ChEBI" id="CHEBI:57540"/>
    </ligand>
</feature>
<feature type="binding site" evidence="1">
    <location>
        <position position="137"/>
    </location>
    <ligand>
        <name>NAD(+)</name>
        <dbReference type="ChEBI" id="CHEBI:57540"/>
    </ligand>
</feature>
<feature type="binding site" evidence="1">
    <location>
        <position position="174"/>
    </location>
    <ligand>
        <name>NAD(+)</name>
        <dbReference type="ChEBI" id="CHEBI:57540"/>
    </ligand>
</feature>
<feature type="binding site" evidence="1">
    <location>
        <position position="291"/>
    </location>
    <ligand>
        <name>NAD(+)</name>
        <dbReference type="ChEBI" id="CHEBI:57540"/>
    </ligand>
</feature>
<feature type="binding site" evidence="1">
    <location>
        <position position="315"/>
    </location>
    <ligand>
        <name>NAD(+)</name>
        <dbReference type="ChEBI" id="CHEBI:57540"/>
    </ligand>
</feature>
<feature type="binding site" evidence="1">
    <location>
        <position position="409"/>
    </location>
    <ligand>
        <name>Zn(2+)</name>
        <dbReference type="ChEBI" id="CHEBI:29105"/>
    </ligand>
</feature>
<feature type="binding site" evidence="1">
    <location>
        <position position="412"/>
    </location>
    <ligand>
        <name>Zn(2+)</name>
        <dbReference type="ChEBI" id="CHEBI:29105"/>
    </ligand>
</feature>
<feature type="binding site" evidence="1">
    <location>
        <position position="427"/>
    </location>
    <ligand>
        <name>Zn(2+)</name>
        <dbReference type="ChEBI" id="CHEBI:29105"/>
    </ligand>
</feature>
<feature type="binding site" evidence="1">
    <location>
        <position position="433"/>
    </location>
    <ligand>
        <name>Zn(2+)</name>
        <dbReference type="ChEBI" id="CHEBI:29105"/>
    </ligand>
</feature>
<proteinExistence type="inferred from homology"/>
<evidence type="ECO:0000255" key="1">
    <source>
        <dbReference type="HAMAP-Rule" id="MF_01588"/>
    </source>
</evidence>
<evidence type="ECO:0000305" key="2"/>
<sequence length="670" mass="74131">MTNIQTQLDNLRKTLRQYEYEYHVLDNPSVPDSEYDRLFHQLKALELEHPEFLTSDSPTQRVGAKPLSGFSQIRHEIPMLSLDNAFSDAEFNAFVKRIEDRLILLPKPLTFCCEPKLDGLAVSILYVNGELTQAATRGDGTTGEDITANIRTIRNVPLQLLTDNPPARLEVRGEVFMPHAGFERLNKYALEHNEKTFANPRNAAAGSLRQLDPNITSKRPLVLNAYGIGIAEGIDLPTTHYDRLQWLKSIGIPVNPEIRLCNGADEVLGFYRDIQNKRSSLGYDIDGTVLKINDIALQNELGFISKAPRWAIAYKFPAQEELTLLNDVEFQVGRTGAITPVAKLEPVFVAGVTVSNATLHNGDEIERLNIAIGDTVVIRRAGDVIPQIIGVLHERRPDNAKPIIFPTNCPVCDSQIIRIEGEAVARCTGGLFCAAQRKEALKHFVSRKAMDIDGVGGKLIEQLVDRELIHTPADLFKLDLTTLTRLERMGAKSAENALNSLENAKSTTLDRFIFALGIREVGEATALNLANHFKTLDALKDANLEELQQVPDVGEVVANRIFIFWREAHNVAVVEDLIAQGVHWETVEVKEASENLFKDKTVVLTGTLTQMGRNEAKALLQQLGAKVSGSVSSKTDFVIAGDGAGSKLAKAQELNITVLTEEEFLAQITR</sequence>
<organism>
    <name type="scientific">Haemophilus influenzae (strain 86-028NP)</name>
    <dbReference type="NCBI Taxonomy" id="281310"/>
    <lineage>
        <taxon>Bacteria</taxon>
        <taxon>Pseudomonadati</taxon>
        <taxon>Pseudomonadota</taxon>
        <taxon>Gammaproteobacteria</taxon>
        <taxon>Pasteurellales</taxon>
        <taxon>Pasteurellaceae</taxon>
        <taxon>Haemophilus</taxon>
    </lineage>
</organism>
<keyword id="KW-0227">DNA damage</keyword>
<keyword id="KW-0234">DNA repair</keyword>
<keyword id="KW-0235">DNA replication</keyword>
<keyword id="KW-0436">Ligase</keyword>
<keyword id="KW-0460">Magnesium</keyword>
<keyword id="KW-0464">Manganese</keyword>
<keyword id="KW-0479">Metal-binding</keyword>
<keyword id="KW-0520">NAD</keyword>
<keyword id="KW-0862">Zinc</keyword>
<accession>Q4QLJ0</accession>